<organism>
    <name type="scientific">Bos taurus</name>
    <name type="common">Bovine</name>
    <dbReference type="NCBI Taxonomy" id="9913"/>
    <lineage>
        <taxon>Eukaryota</taxon>
        <taxon>Metazoa</taxon>
        <taxon>Chordata</taxon>
        <taxon>Craniata</taxon>
        <taxon>Vertebrata</taxon>
        <taxon>Euteleostomi</taxon>
        <taxon>Mammalia</taxon>
        <taxon>Eutheria</taxon>
        <taxon>Laurasiatheria</taxon>
        <taxon>Artiodactyla</taxon>
        <taxon>Ruminantia</taxon>
        <taxon>Pecora</taxon>
        <taxon>Bovidae</taxon>
        <taxon>Bovinae</taxon>
        <taxon>Bos</taxon>
    </lineage>
</organism>
<keyword id="KW-0025">Alternative splicing</keyword>
<keyword id="KW-0269">Exonuclease</keyword>
<keyword id="KW-0378">Hydrolase</keyword>
<keyword id="KW-0460">Magnesium</keyword>
<keyword id="KW-0479">Metal-binding</keyword>
<keyword id="KW-0540">Nuclease</keyword>
<keyword id="KW-0547">Nucleotide-binding</keyword>
<keyword id="KW-0539">Nucleus</keyword>
<keyword id="KW-0597">Phosphoprotein</keyword>
<keyword id="KW-1185">Reference proteome</keyword>
<keyword id="KW-0694">RNA-binding</keyword>
<feature type="chain" id="PRO_0000249821" description="Decapping and exoribonuclease protein">
    <location>
        <begin position="1"/>
        <end position="397"/>
    </location>
</feature>
<feature type="region of interest" description="Disordered" evidence="4">
    <location>
        <begin position="1"/>
        <end position="37"/>
    </location>
</feature>
<feature type="region of interest" description="Disordered" evidence="4">
    <location>
        <begin position="67"/>
        <end position="88"/>
    </location>
</feature>
<feature type="compositionally biased region" description="Basic and acidic residues" evidence="4">
    <location>
        <begin position="1"/>
        <end position="20"/>
    </location>
</feature>
<feature type="binding site" evidence="1">
    <location>
        <position position="58"/>
    </location>
    <ligand>
        <name>substrate</name>
    </ligand>
</feature>
<feature type="binding site" evidence="1">
    <location>
        <position position="101"/>
    </location>
    <ligand>
        <name>substrate</name>
    </ligand>
</feature>
<feature type="binding site" evidence="1">
    <location>
        <begin position="131"/>
        <end position="133"/>
    </location>
    <ligand>
        <name>substrate</name>
    </ligand>
</feature>
<feature type="binding site" evidence="1">
    <location>
        <position position="192"/>
    </location>
    <ligand>
        <name>Mg(2+)</name>
        <dbReference type="ChEBI" id="CHEBI:18420"/>
        <label>1</label>
    </ligand>
</feature>
<feature type="binding site" evidence="1">
    <location>
        <position position="192"/>
    </location>
    <ligand>
        <name>Mg(2+)</name>
        <dbReference type="ChEBI" id="CHEBI:18420"/>
        <label>2</label>
    </ligand>
</feature>
<feature type="binding site" evidence="1">
    <location>
        <position position="217"/>
    </location>
    <ligand>
        <name>substrate</name>
    </ligand>
</feature>
<feature type="binding site" evidence="1">
    <location>
        <position position="234"/>
    </location>
    <ligand>
        <name>Mg(2+)</name>
        <dbReference type="ChEBI" id="CHEBI:18420"/>
        <label>2</label>
    </ligand>
</feature>
<feature type="binding site" evidence="1">
    <location>
        <position position="234"/>
    </location>
    <ligand>
        <name>substrate</name>
    </ligand>
</feature>
<feature type="binding site" evidence="1">
    <location>
        <position position="236"/>
    </location>
    <ligand>
        <name>Mg(2+)</name>
        <dbReference type="ChEBI" id="CHEBI:18420"/>
        <label>1</label>
    </ligand>
</feature>
<feature type="binding site" evidence="1">
    <location>
        <position position="236"/>
    </location>
    <ligand>
        <name>Mg(2+)</name>
        <dbReference type="ChEBI" id="CHEBI:18420"/>
        <label>2</label>
    </ligand>
</feature>
<feature type="binding site" evidence="1">
    <location>
        <position position="253"/>
    </location>
    <ligand>
        <name>Mg(2+)</name>
        <dbReference type="ChEBI" id="CHEBI:18420"/>
        <label>1</label>
    </ligand>
</feature>
<feature type="binding site" evidence="1">
    <location>
        <position position="254"/>
    </location>
    <ligand>
        <name>Mg(2+)</name>
        <dbReference type="ChEBI" id="CHEBI:18420"/>
        <label>1</label>
    </ligand>
</feature>
<feature type="binding site" evidence="1">
    <location>
        <position position="255"/>
    </location>
    <ligand>
        <name>substrate</name>
    </ligand>
</feature>
<feature type="binding site" evidence="1">
    <location>
        <position position="280"/>
    </location>
    <ligand>
        <name>substrate</name>
    </ligand>
</feature>
<feature type="modified residue" description="Phosphothreonine" evidence="3">
    <location>
        <position position="392"/>
    </location>
</feature>
<feature type="modified residue" description="Phosphoserine" evidence="1">
    <location>
        <position position="394"/>
    </location>
</feature>
<feature type="splice variant" id="VSP_020555" description="In isoform 4." evidence="5">
    <original>DKPGVSPDPSGEVNTNVAFCSVLRSRLGNHPLLFSGEVDCTDPQAPSTQPPTCYVELKTSKEMHSPGQWKSFYRHKLLKWWAQSFLPGVPNVVAGFRNPEGFVCSLK</original>
    <variation>GESCPDSAPSPIPRDREPPALAAVSLLVQTNPESPQILLGKLTPTWPSALCYAAAWETTLFFFPGRWTAQTPRPHPHSPPPAMWSSRPPRRCTALANGRASTDTSS</variation>
    <location>
        <begin position="198"/>
        <end position="304"/>
    </location>
</feature>
<feature type="splice variant" id="VSP_020556" description="In isoform 2." evidence="5">
    <original>R</original>
    <variation>RFRTGVDRMRTL</variation>
    <location>
        <position position="271"/>
    </location>
</feature>
<feature type="splice variant" id="VSP_020557" description="In isoform 4." evidence="5">
    <location>
        <begin position="305"/>
        <end position="397"/>
    </location>
</feature>
<feature type="splice variant" id="VSP_020558" description="In isoform 3." evidence="5">
    <original>YVEAVTQDLPSPPKTPSPK</original>
    <variation>PPGPHQSAWPQSGPVPPPADGEQRL</variation>
    <location>
        <begin position="378"/>
        <end position="396"/>
    </location>
</feature>
<feature type="sequence conflict" description="In Ref. 1; AAX46626." evidence="6" ref="1">
    <original>R</original>
    <variation>Q</variation>
    <location>
        <position position="157"/>
    </location>
</feature>
<feature type="sequence conflict" description="In Ref. 1; AAX46626." evidence="6" ref="1">
    <original>R</original>
    <variation>H</variation>
    <location>
        <position position="223"/>
    </location>
</feature>
<feature type="sequence conflict" description="In Ref. 1; AAX46626." evidence="6" ref="1">
    <original>A</original>
    <variation>V</variation>
    <location>
        <position position="342"/>
    </location>
</feature>
<feature type="sequence conflict" description="In Ref. 1; AAX08842." evidence="6" ref="1">
    <original>R</original>
    <variation>G</variation>
    <location>
        <position position="348"/>
    </location>
</feature>
<reference key="1">
    <citation type="journal article" date="2005" name="BMC Genomics">
        <title>Characterization of 954 bovine full-CDS cDNA sequences.</title>
        <authorList>
            <person name="Harhay G.P."/>
            <person name="Sonstegard T.S."/>
            <person name="Keele J.W."/>
            <person name="Heaton M.P."/>
            <person name="Clawson M.L."/>
            <person name="Snelling W.M."/>
            <person name="Wiedmann R.T."/>
            <person name="Van Tassell C.P."/>
            <person name="Smith T.P.L."/>
        </authorList>
    </citation>
    <scope>NUCLEOTIDE SEQUENCE [LARGE SCALE MRNA] (ISOFORMS 1; 2; 3 AND 4)</scope>
</reference>
<dbReference type="EC" id="3.6.1.-" evidence="1"/>
<dbReference type="EC" id="3.1.13.-" evidence="1"/>
<dbReference type="EMBL" id="BT020784">
    <property type="protein sequence ID" value="AAX08801.1"/>
    <property type="molecule type" value="mRNA"/>
</dbReference>
<dbReference type="EMBL" id="BT020825">
    <property type="protein sequence ID" value="AAX08842.1"/>
    <property type="molecule type" value="mRNA"/>
</dbReference>
<dbReference type="EMBL" id="BT021169">
    <property type="protein sequence ID" value="AAX31351.1"/>
    <property type="molecule type" value="mRNA"/>
</dbReference>
<dbReference type="EMBL" id="BT021171">
    <property type="protein sequence ID" value="AAX31353.1"/>
    <property type="molecule type" value="mRNA"/>
</dbReference>
<dbReference type="EMBL" id="BT021779">
    <property type="protein sequence ID" value="AAX46626.1"/>
    <property type="status" value="ALT_FRAME"/>
    <property type="molecule type" value="mRNA"/>
</dbReference>
<dbReference type="EMBL" id="BT021813">
    <property type="protein sequence ID" value="AAX46660.1"/>
    <property type="molecule type" value="mRNA"/>
</dbReference>
<dbReference type="RefSeq" id="NP_001014872.2">
    <property type="nucleotide sequence ID" value="NM_001014872.2"/>
</dbReference>
<dbReference type="SMR" id="Q5E9Y5"/>
<dbReference type="FunCoup" id="Q5E9Y5">
    <property type="interactions" value="2313"/>
</dbReference>
<dbReference type="STRING" id="9913.ENSBTAP00000007340"/>
<dbReference type="PaxDb" id="9913-ENSBTAP00000007340"/>
<dbReference type="KEGG" id="bta:508460"/>
<dbReference type="CTD" id="1797"/>
<dbReference type="eggNOG" id="KOG1982">
    <property type="taxonomic scope" value="Eukaryota"/>
</dbReference>
<dbReference type="InParanoid" id="Q5E9Y5"/>
<dbReference type="OrthoDB" id="5853397at2759"/>
<dbReference type="Proteomes" id="UP000009136">
    <property type="component" value="Unplaced"/>
</dbReference>
<dbReference type="GO" id="GO:0005829">
    <property type="term" value="C:cytosol"/>
    <property type="evidence" value="ECO:0000318"/>
    <property type="project" value="GO_Central"/>
</dbReference>
<dbReference type="GO" id="GO:0005634">
    <property type="term" value="C:nucleus"/>
    <property type="evidence" value="ECO:0000250"/>
    <property type="project" value="UniProtKB"/>
</dbReference>
<dbReference type="GO" id="GO:0008409">
    <property type="term" value="F:5'-3' exonuclease activity"/>
    <property type="evidence" value="ECO:0000250"/>
    <property type="project" value="UniProtKB"/>
</dbReference>
<dbReference type="GO" id="GO:0000287">
    <property type="term" value="F:magnesium ion binding"/>
    <property type="evidence" value="ECO:0000250"/>
    <property type="project" value="UniProtKB"/>
</dbReference>
<dbReference type="GO" id="GO:0034353">
    <property type="term" value="F:mRNA 5'-diphosphatase activity"/>
    <property type="evidence" value="ECO:0000250"/>
    <property type="project" value="UniProtKB"/>
</dbReference>
<dbReference type="GO" id="GO:0003729">
    <property type="term" value="F:mRNA binding"/>
    <property type="evidence" value="ECO:0000250"/>
    <property type="project" value="UniProtKB"/>
</dbReference>
<dbReference type="GO" id="GO:0000166">
    <property type="term" value="F:nucleotide binding"/>
    <property type="evidence" value="ECO:0007669"/>
    <property type="project" value="UniProtKB-KW"/>
</dbReference>
<dbReference type="GO" id="GO:0110152">
    <property type="term" value="F:RNA NAD+-cap (NAD+-forming) hydrolase activity"/>
    <property type="evidence" value="ECO:0000250"/>
    <property type="project" value="UniProtKB"/>
</dbReference>
<dbReference type="GO" id="GO:0006402">
    <property type="term" value="P:mRNA catabolic process"/>
    <property type="evidence" value="ECO:0000250"/>
    <property type="project" value="UniProtKB"/>
</dbReference>
<dbReference type="GO" id="GO:0110155">
    <property type="term" value="P:NAD-cap decapping"/>
    <property type="evidence" value="ECO:0000250"/>
    <property type="project" value="UniProtKB"/>
</dbReference>
<dbReference type="GO" id="GO:0071028">
    <property type="term" value="P:nuclear mRNA surveillance"/>
    <property type="evidence" value="ECO:0000250"/>
    <property type="project" value="UniProtKB"/>
</dbReference>
<dbReference type="GO" id="GO:0000956">
    <property type="term" value="P:nuclear-transcribed mRNA catabolic process"/>
    <property type="evidence" value="ECO:0000318"/>
    <property type="project" value="GO_Central"/>
</dbReference>
<dbReference type="GO" id="GO:0090304">
    <property type="term" value="P:nucleic acid metabolic process"/>
    <property type="evidence" value="ECO:0000250"/>
    <property type="project" value="UniProtKB"/>
</dbReference>
<dbReference type="GO" id="GO:0050779">
    <property type="term" value="P:RNA destabilization"/>
    <property type="evidence" value="ECO:0000250"/>
    <property type="project" value="UniProtKB"/>
</dbReference>
<dbReference type="InterPro" id="IPR013961">
    <property type="entry name" value="RAI1"/>
</dbReference>
<dbReference type="InterPro" id="IPR039039">
    <property type="entry name" value="RAI1-like_fam"/>
</dbReference>
<dbReference type="PANTHER" id="PTHR12395:SF9">
    <property type="entry name" value="DECAPPING AND EXORIBONUCLEASE PROTEIN"/>
    <property type="match status" value="1"/>
</dbReference>
<dbReference type="PANTHER" id="PTHR12395">
    <property type="entry name" value="DOM-3 RELATED"/>
    <property type="match status" value="1"/>
</dbReference>
<dbReference type="Pfam" id="PF08652">
    <property type="entry name" value="RAI1"/>
    <property type="match status" value="1"/>
</dbReference>
<protein>
    <recommendedName>
        <fullName evidence="2">Decapping and exoribonuclease protein</fullName>
        <shortName evidence="2">DXO</shortName>
        <ecNumber evidence="1">3.6.1.-</ecNumber>
    </recommendedName>
    <alternativeName>
        <fullName evidence="6">5'-3' exoribonuclease DXO</fullName>
        <ecNumber evidence="1">3.1.13.-</ecNumber>
    </alternativeName>
    <alternativeName>
        <fullName evidence="2">Dom-3 homolog Z</fullName>
    </alternativeName>
    <alternativeName>
        <fullName evidence="6">NAD-capped RNA hydrolase DXO</fullName>
        <shortName evidence="6">DeNADding enzyme DXO</shortName>
        <ecNumber evidence="1">3.6.1.-</ecNumber>
    </alternativeName>
</protein>
<accession>Q5E9Y5</accession>
<accession>Q58CY4</accession>
<accession>Q58D18</accession>
<accession>Q5BIQ5</accession>
<accession>Q5E9U5</accession>
<evidence type="ECO:0000250" key="1">
    <source>
        <dbReference type="UniProtKB" id="O70348"/>
    </source>
</evidence>
<evidence type="ECO:0000250" key="2">
    <source>
        <dbReference type="UniProtKB" id="O77932"/>
    </source>
</evidence>
<evidence type="ECO:0000250" key="3">
    <source>
        <dbReference type="UniProtKB" id="Q6MG77"/>
    </source>
</evidence>
<evidence type="ECO:0000256" key="4">
    <source>
        <dbReference type="SAM" id="MobiDB-lite"/>
    </source>
</evidence>
<evidence type="ECO:0000303" key="5">
    <source>
    </source>
</evidence>
<evidence type="ECO:0000305" key="6"/>
<proteinExistence type="evidence at transcript level"/>
<gene>
    <name evidence="2" type="primary">DXO</name>
    <name evidence="2" type="synonym">DOM3Z</name>
</gene>
<comment type="function">
    <text evidence="1 2">Decapping enzyme for NAD-capped RNAs: specifically hydrolyzes the nicotinamide adenine dinucleotide (NAD) cap from a subset of RNAs by removing the entire NAD moiety from the 5'-end of an NAD-capped RNA. The NAD-cap is present at the 5'-end of some RNAs and snoRNAs. In contrast to the canonical 5'-end N7 methylguanosine (m7G) cap, the NAD cap promotes mRNA decay (By similarity). Preferentially acts on NAD-capped transcripts in response to environmental stress (By similarity). Also acts as a non-canonical decapping enzyme that removes the entire cap structure of m7G capped or incompletely capped RNAs and mediates their subsequent degradation. Specifically degrades pre-mRNAs with a defective 5'-end m7G cap and is part of a pre-mRNA capping quality control. Has decapping activity toward incomplete 5'-end m7G cap mRNAs such as unmethylated 5'-end-capped RNA (cap0), while it has no activity toward 2'-O-ribose methylated m7G cap (cap1). In contrast to canonical decapping enzymes DCP2 and NUDT16, which cleave the cap within the triphosphate linkage, the decapping activity releases the entire cap structure GpppN and a 5'-end monophosphate RNA. Also has 5'-3' exoribonuclease activities: The 5'-end monophosphate RNA is then degraded by the 5'-3' exoribonuclease activity, enabling this enzyme to decap and degrade incompletely capped mRNAs. Also possesses RNA 5'-pyrophosphohydrolase activity by hydrolyzing the 5'-end triphosphate to release pyrophosphates (By similarity). Exhibits decapping activity towards FAD-capped RNAs (By similarity). Exhibits decapping activity towards dpCoA-capped RNAs in vitro (By similarity).</text>
</comment>
<comment type="catalytic activity">
    <reaction evidence="1">
        <text>a 5'-end triphospho-ribonucleoside in mRNA + H2O = a 5'-end phospho-ribonucleoside in mRNA + diphosphate + H(+)</text>
        <dbReference type="Rhea" id="RHEA:78683"/>
        <dbReference type="Rhea" id="RHEA-COMP:15692"/>
        <dbReference type="Rhea" id="RHEA-COMP:17164"/>
        <dbReference type="ChEBI" id="CHEBI:15377"/>
        <dbReference type="ChEBI" id="CHEBI:15378"/>
        <dbReference type="ChEBI" id="CHEBI:33019"/>
        <dbReference type="ChEBI" id="CHEBI:138282"/>
        <dbReference type="ChEBI" id="CHEBI:167618"/>
    </reaction>
    <physiologicalReaction direction="left-to-right" evidence="1">
        <dbReference type="Rhea" id="RHEA:78684"/>
    </physiologicalReaction>
</comment>
<comment type="catalytic activity">
    <reaction evidence="1">
        <text>a 5'-end NAD(+)-phospho-ribonucleoside in mRNA + H2O = a 5'-end phospho-ribonucleoside in mRNA + NAD(+) + H(+)</text>
        <dbReference type="Rhea" id="RHEA:60880"/>
        <dbReference type="Rhea" id="RHEA-COMP:15692"/>
        <dbReference type="Rhea" id="RHEA-COMP:15698"/>
        <dbReference type="ChEBI" id="CHEBI:15377"/>
        <dbReference type="ChEBI" id="CHEBI:15378"/>
        <dbReference type="ChEBI" id="CHEBI:57540"/>
        <dbReference type="ChEBI" id="CHEBI:138282"/>
        <dbReference type="ChEBI" id="CHEBI:144029"/>
    </reaction>
    <physiologicalReaction direction="left-to-right" evidence="1">
        <dbReference type="Rhea" id="RHEA:60881"/>
    </physiologicalReaction>
</comment>
<comment type="catalytic activity">
    <reaction evidence="1">
        <text>a 5'-end NAD(+)-phospho-ribonucleoside in snoRNA + H2O = a 5'-end phospho-ribonucleoside in snoRNA + NAD(+) + H(+)</text>
        <dbReference type="Rhea" id="RHEA:60892"/>
        <dbReference type="Rhea" id="RHEA-COMP:15699"/>
        <dbReference type="Rhea" id="RHEA-COMP:15700"/>
        <dbReference type="ChEBI" id="CHEBI:15377"/>
        <dbReference type="ChEBI" id="CHEBI:15378"/>
        <dbReference type="ChEBI" id="CHEBI:57540"/>
        <dbReference type="ChEBI" id="CHEBI:138282"/>
        <dbReference type="ChEBI" id="CHEBI:144029"/>
    </reaction>
    <physiologicalReaction direction="left-to-right" evidence="1">
        <dbReference type="Rhea" id="RHEA:60893"/>
    </physiologicalReaction>
</comment>
<comment type="catalytic activity">
    <reaction evidence="1">
        <text>a 5'-end (N(7)-methyl 5'-triphosphoguanosine)-ribonucleoside-ribonucleotide in mRNA + H2O = a (N(7)-methyl 5'-triphosphoguanosine)-nucleoside + a 5'-end phospho-ribonucleoside in mRNA + H(+)</text>
        <dbReference type="Rhea" id="RHEA:66928"/>
        <dbReference type="Rhea" id="RHEA-COMP:15692"/>
        <dbReference type="Rhea" id="RHEA-COMP:17313"/>
        <dbReference type="ChEBI" id="CHEBI:15377"/>
        <dbReference type="ChEBI" id="CHEBI:15378"/>
        <dbReference type="ChEBI" id="CHEBI:138282"/>
        <dbReference type="ChEBI" id="CHEBI:172876"/>
        <dbReference type="ChEBI" id="CHEBI:172877"/>
    </reaction>
    <physiologicalReaction direction="left-to-right" evidence="1">
        <dbReference type="Rhea" id="RHEA:66929"/>
    </physiologicalReaction>
</comment>
<comment type="catalytic activity">
    <reaction evidence="1">
        <text>a 5'-end FAD-phospho-ribonucleoside in mRNA + H2O = a 5'-end phospho-ribonucleoside in mRNA + FAD + H(+)</text>
        <dbReference type="Rhea" id="RHEA:67492"/>
        <dbReference type="Rhea" id="RHEA-COMP:15692"/>
        <dbReference type="Rhea" id="RHEA-COMP:17275"/>
        <dbReference type="ChEBI" id="CHEBI:15377"/>
        <dbReference type="ChEBI" id="CHEBI:15378"/>
        <dbReference type="ChEBI" id="CHEBI:57692"/>
        <dbReference type="ChEBI" id="CHEBI:138282"/>
        <dbReference type="ChEBI" id="CHEBI:172372"/>
    </reaction>
    <physiologicalReaction direction="left-to-right" evidence="1">
        <dbReference type="Rhea" id="RHEA:67493"/>
    </physiologicalReaction>
</comment>
<comment type="catalytic activity">
    <reaction evidence="1">
        <text>a 5'-end CoA-ribonucleoside in mRNA + H2O = 3'-dephospho-CoA + a 5'-end phospho-ribonucleoside in mRNA + H(+)</text>
        <dbReference type="Rhea" id="RHEA:67496"/>
        <dbReference type="Rhea" id="RHEA-COMP:15692"/>
        <dbReference type="Rhea" id="RHEA-COMP:17276"/>
        <dbReference type="ChEBI" id="CHEBI:15377"/>
        <dbReference type="ChEBI" id="CHEBI:15378"/>
        <dbReference type="ChEBI" id="CHEBI:57328"/>
        <dbReference type="ChEBI" id="CHEBI:138282"/>
        <dbReference type="ChEBI" id="CHEBI:172371"/>
    </reaction>
    <physiologicalReaction direction="left-to-right" evidence="1">
        <dbReference type="Rhea" id="RHEA:67497"/>
    </physiologicalReaction>
</comment>
<comment type="cofactor">
    <cofactor evidence="1">
        <name>Mg(2+)</name>
        <dbReference type="ChEBI" id="CHEBI:18420"/>
    </cofactor>
    <text evidence="1">Binds 2 magnesium ions.</text>
</comment>
<comment type="subcellular location">
    <subcellularLocation>
        <location evidence="2">Nucleus</location>
    </subcellularLocation>
</comment>
<comment type="alternative products">
    <event type="alternative splicing"/>
    <isoform>
        <id>Q5E9Y5-1</id>
        <name>1</name>
        <sequence type="displayed"/>
    </isoform>
    <isoform>
        <id>Q5E9Y5-2</id>
        <name>2</name>
        <sequence type="described" ref="VSP_020556"/>
    </isoform>
    <isoform>
        <id>Q5E9Y5-3</id>
        <name>3</name>
        <sequence type="described" ref="VSP_020558"/>
    </isoform>
    <isoform>
        <id>Q5E9Y5-4</id>
        <name>4</name>
        <sequence type="described" ref="VSP_020555 VSP_020557"/>
    </isoform>
</comment>
<comment type="similarity">
    <text evidence="6">Belongs to the DXO/Dom3Z family.</text>
</comment>
<comment type="sequence caution" evidence="6">
    <molecule>Isoform 2</molecule>
    <conflict type="frameshift">
        <sequence resource="EMBL-CDS" id="AAX46626"/>
    </conflict>
</comment>
<sequence length="397" mass="45168">MESRGTKREAGKIEVAEPRNKLPRPAPSLPTDPALYSGPFPFYRRPSELGCFSLDAQRQYHGDARALRYYSPPPTNGQSPNFDLRDGYPDRYQPRDEEVQERLDHLLRWLLEHRGQLEGGPGWLAGAIVTWRGHLTKLLTTPYERQEGWQLAASRFRGTLYLSEVETPAARVQRLTRPPLLRELMYMGYKFEQYMCADKPGVSPDPSGEVNTNVAFCSVLRSRLGNHPLLFSGEVDCTDPQAPSTQPPTCYVELKTSKEMHSPGQWKSFYRHKLLKWWAQSFLPGVPNVVAGFRNPEGFVCSLKTFPTMEMFEYVRNDRDGWNPSVCMNFCAAFLSFAQNTAVQDDPRLVYLFSWEPGGPVTVSEHRDAPHAFLPPWYVEAVTQDLPSPPKTPSPKD</sequence>
<name>DXO_BOVIN</name>